<protein>
    <recommendedName>
        <fullName>Polyphenol oxidase C, chloroplastic</fullName>
        <shortName>PPO</shortName>
        <ecNumber>1.10.3.1</ecNumber>
    </recommendedName>
    <alternativeName>
        <fullName>Catechol oxidase</fullName>
    </alternativeName>
</protein>
<organism>
    <name type="scientific">Solanum lycopersicum</name>
    <name type="common">Tomato</name>
    <name type="synonym">Lycopersicon esculentum</name>
    <dbReference type="NCBI Taxonomy" id="4081"/>
    <lineage>
        <taxon>Eukaryota</taxon>
        <taxon>Viridiplantae</taxon>
        <taxon>Streptophyta</taxon>
        <taxon>Embryophyta</taxon>
        <taxon>Tracheophyta</taxon>
        <taxon>Spermatophyta</taxon>
        <taxon>Magnoliopsida</taxon>
        <taxon>eudicotyledons</taxon>
        <taxon>Gunneridae</taxon>
        <taxon>Pentapetalae</taxon>
        <taxon>asterids</taxon>
        <taxon>lamiids</taxon>
        <taxon>Solanales</taxon>
        <taxon>Solanaceae</taxon>
        <taxon>Solanoideae</taxon>
        <taxon>Solaneae</taxon>
        <taxon>Solanum</taxon>
        <taxon>Solanum subgen. Lycopersicon</taxon>
    </lineage>
</organism>
<proteinExistence type="inferred from homology"/>
<feature type="transit peptide" description="Chloroplast" evidence="1">
    <location>
        <begin position="1"/>
        <end position="83"/>
    </location>
</feature>
<feature type="chain" id="PRO_0000035912" description="Polyphenol oxidase C, chloroplastic">
    <location>
        <begin position="84"/>
        <end position="626"/>
    </location>
</feature>
<feature type="binding site" evidence="2">
    <location>
        <position position="176"/>
    </location>
    <ligand>
        <name>Cu cation</name>
        <dbReference type="ChEBI" id="CHEBI:23378"/>
        <label>A</label>
    </ligand>
</feature>
<feature type="binding site" evidence="2">
    <location>
        <position position="194"/>
    </location>
    <ligand>
        <name>Cu cation</name>
        <dbReference type="ChEBI" id="CHEBI:23378"/>
        <label>A</label>
    </ligand>
</feature>
<feature type="binding site" evidence="2">
    <location>
        <position position="203"/>
    </location>
    <ligand>
        <name>Cu cation</name>
        <dbReference type="ChEBI" id="CHEBI:23378"/>
        <label>A</label>
    </ligand>
</feature>
<feature type="binding site" evidence="2">
    <location>
        <position position="324"/>
    </location>
    <ligand>
        <name>Cu cation</name>
        <dbReference type="ChEBI" id="CHEBI:23378"/>
        <label>B</label>
    </ligand>
</feature>
<feature type="binding site" evidence="2">
    <location>
        <position position="328"/>
    </location>
    <ligand>
        <name>Cu cation</name>
        <dbReference type="ChEBI" id="CHEBI:23378"/>
        <label>B</label>
    </ligand>
</feature>
<feature type="binding site" evidence="2">
    <location>
        <position position="366"/>
    </location>
    <ligand>
        <name>Cu cation</name>
        <dbReference type="ChEBI" id="CHEBI:23378"/>
        <label>B</label>
    </ligand>
</feature>
<feature type="disulfide bond" evidence="2">
    <location>
        <begin position="94"/>
        <end position="110"/>
    </location>
</feature>
<feature type="disulfide bond" evidence="2">
    <location>
        <begin position="109"/>
        <end position="177"/>
    </location>
</feature>
<feature type="cross-link" description="2'-(S-cysteinyl)-histidine (Cys-His)" evidence="2">
    <location>
        <begin position="180"/>
        <end position="194"/>
    </location>
</feature>
<sequence length="626" mass="70333">MASLCSNSSTTSLKTPFTSLGSTPKPCQLFLHGKRNKAFKVSCKVTNTNGNQDETNSVDRRNVLLGLGGLYGVANAIPLAASAAPTPPPDLSSCSIARIDENQVVSYSCCAPKPDDMEKVPYYKFPSMTKLRVRQPAHEADEEYIAKYNCAVTKMKDLDKTQPDNPIGFKQQANIHCAYCNGGYSIDGKVLQVHNSWLFFPFHRWYLYFYERILGSLIDDPTFGLPFWNWDHPKGMRFPPMFDVPGTALYDERRGDQIHNGNGIDLGYFGDQVETTQLQLMTNNLTLMYRQLVTNSPCPLMSLVDLTLFGSTVEDAGTVENIPHSPVHIWVGTRRGSVLPVGKISNGEDMGNFYSAGLDPLFYCHHSNVDRMWNEWKATGGKRTDIQNKDWLNSEFFFYDENGNPFKVRVRDCLDTKKMGYDYHATATPWRNFKPKTKASAGKVNTGSIPPESQVFPLAKLDKAISFSINRPASSRTQQEKNAQEEVLTFNAIKYDNRDYIRFDVFLNVDNNVNANELDKAEFAGSYTSLPHVHRVGDPKHTATATLRLAITELLEDIGLEDEDTIAVTLVPKKGDISIGGVEIKLAIVKLVCVVNLLTLQLNKDRFCYDSVFVCWFVCLFFNFHV</sequence>
<reference key="1">
    <citation type="journal article" date="1993" name="Plant Mol. Biol.">
        <title>Organisation of the tomato polyphenol oxidase gene family.</title>
        <authorList>
            <person name="Newman S.M."/>
            <person name="Eannetta N.T."/>
            <person name="Yu H."/>
            <person name="Prince J.P."/>
            <person name="de Vicente M.C."/>
            <person name="Tanksley S.D."/>
            <person name="Steffens J.C."/>
        </authorList>
    </citation>
    <scope>NUCLEOTIDE SEQUENCE [GENOMIC DNA]</scope>
    <source>
        <strain>cv. VFNT Cherry</strain>
    </source>
</reference>
<evidence type="ECO:0000250" key="1"/>
<evidence type="ECO:0000250" key="2">
    <source>
        <dbReference type="UniProtKB" id="Q9ZP19"/>
    </source>
</evidence>
<evidence type="ECO:0000305" key="3"/>
<dbReference type="EC" id="1.10.3.1"/>
<dbReference type="EMBL" id="Z12835">
    <property type="protein sequence ID" value="CAA78297.1"/>
    <property type="molecule type" value="Genomic_DNA"/>
</dbReference>
<dbReference type="PIR" id="S33541">
    <property type="entry name" value="S33541"/>
</dbReference>
<dbReference type="SMR" id="Q08305"/>
<dbReference type="STRING" id="4081.Q08305"/>
<dbReference type="InParanoid" id="Q08305"/>
<dbReference type="Proteomes" id="UP000004994">
    <property type="component" value="Unplaced"/>
</dbReference>
<dbReference type="ExpressionAtlas" id="Q08305">
    <property type="expression patterns" value="baseline and differential"/>
</dbReference>
<dbReference type="GO" id="GO:0009543">
    <property type="term" value="C:chloroplast thylakoid lumen"/>
    <property type="evidence" value="ECO:0007669"/>
    <property type="project" value="UniProtKB-SubCell"/>
</dbReference>
<dbReference type="GO" id="GO:0004097">
    <property type="term" value="F:catechol oxidase activity"/>
    <property type="evidence" value="ECO:0007669"/>
    <property type="project" value="UniProtKB-EC"/>
</dbReference>
<dbReference type="GO" id="GO:0046872">
    <property type="term" value="F:metal ion binding"/>
    <property type="evidence" value="ECO:0007669"/>
    <property type="project" value="UniProtKB-KW"/>
</dbReference>
<dbReference type="GO" id="GO:0046148">
    <property type="term" value="P:pigment biosynthetic process"/>
    <property type="evidence" value="ECO:0007669"/>
    <property type="project" value="InterPro"/>
</dbReference>
<dbReference type="Gene3D" id="1.10.1280.10">
    <property type="entry name" value="Di-copper center containing domain from catechol oxidase"/>
    <property type="match status" value="1"/>
</dbReference>
<dbReference type="InterPro" id="IPR008922">
    <property type="entry name" value="Di-copper_centre_dom_sf"/>
</dbReference>
<dbReference type="InterPro" id="IPR016213">
    <property type="entry name" value="Polyphenol_oxidase"/>
</dbReference>
<dbReference type="InterPro" id="IPR022740">
    <property type="entry name" value="Polyphenol_oxidase_C"/>
</dbReference>
<dbReference type="InterPro" id="IPR022739">
    <property type="entry name" value="Polyphenol_oxidase_cen"/>
</dbReference>
<dbReference type="InterPro" id="IPR050316">
    <property type="entry name" value="Tyrosinase/Hemocyanin"/>
</dbReference>
<dbReference type="InterPro" id="IPR002227">
    <property type="entry name" value="Tyrosinase_Cu-bd"/>
</dbReference>
<dbReference type="PANTHER" id="PTHR11474:SF111">
    <property type="entry name" value="POLYPHENOL OXIDASE A, CHLOROPLASTIC"/>
    <property type="match status" value="1"/>
</dbReference>
<dbReference type="PANTHER" id="PTHR11474">
    <property type="entry name" value="TYROSINASE FAMILY MEMBER"/>
    <property type="match status" value="1"/>
</dbReference>
<dbReference type="Pfam" id="PF12142">
    <property type="entry name" value="PPO1_DWL"/>
    <property type="match status" value="1"/>
</dbReference>
<dbReference type="Pfam" id="PF12143">
    <property type="entry name" value="PPO1_KFDV"/>
    <property type="match status" value="1"/>
</dbReference>
<dbReference type="Pfam" id="PF00264">
    <property type="entry name" value="Tyrosinase"/>
    <property type="match status" value="1"/>
</dbReference>
<dbReference type="PIRSF" id="PIRSF000290">
    <property type="entry name" value="PPO_plant"/>
    <property type="match status" value="1"/>
</dbReference>
<dbReference type="PRINTS" id="PR00092">
    <property type="entry name" value="TYROSINASE"/>
</dbReference>
<dbReference type="SUPFAM" id="SSF48056">
    <property type="entry name" value="Di-copper centre-containing domain"/>
    <property type="match status" value="1"/>
</dbReference>
<dbReference type="PROSITE" id="PS00497">
    <property type="entry name" value="TYROSINASE_1"/>
    <property type="match status" value="1"/>
</dbReference>
<dbReference type="PROSITE" id="PS00498">
    <property type="entry name" value="TYROSINASE_2"/>
    <property type="match status" value="1"/>
</dbReference>
<name>PPOC_SOLLC</name>
<comment type="function">
    <text>Catalyzes the oxidation of mono- and o-diphenols to o-diquinones.</text>
</comment>
<comment type="catalytic activity">
    <reaction>
        <text>2 catechol + O2 = 2 1,2-benzoquinone + 2 H2O</text>
        <dbReference type="Rhea" id="RHEA:21632"/>
        <dbReference type="ChEBI" id="CHEBI:15377"/>
        <dbReference type="ChEBI" id="CHEBI:15379"/>
        <dbReference type="ChEBI" id="CHEBI:17253"/>
        <dbReference type="ChEBI" id="CHEBI:18135"/>
        <dbReference type="EC" id="1.10.3.1"/>
    </reaction>
</comment>
<comment type="cofactor">
    <cofactor evidence="2">
        <name>Cu(2+)</name>
        <dbReference type="ChEBI" id="CHEBI:29036"/>
    </cofactor>
    <text evidence="2">Binds 2 copper ions per subunit.</text>
</comment>
<comment type="subcellular location">
    <subcellularLocation>
        <location>Plastid</location>
        <location>Chloroplast thylakoid lumen</location>
    </subcellularLocation>
</comment>
<comment type="similarity">
    <text evidence="3">Belongs to the tyrosinase family.</text>
</comment>
<accession>Q08305</accession>
<keyword id="KW-0150">Chloroplast</keyword>
<keyword id="KW-0186">Copper</keyword>
<keyword id="KW-1015">Disulfide bond</keyword>
<keyword id="KW-0479">Metal-binding</keyword>
<keyword id="KW-0560">Oxidoreductase</keyword>
<keyword id="KW-0934">Plastid</keyword>
<keyword id="KW-1185">Reference proteome</keyword>
<keyword id="KW-0883">Thioether bond</keyword>
<keyword id="KW-0793">Thylakoid</keyword>
<keyword id="KW-0809">Transit peptide</keyword>